<comment type="function">
    <text evidence="1">Component of the cytochrome b6-f complex, which mediates electron transfer between photosystem II (PSII) and photosystem I (PSI), cyclic electron flow around PSI, and state transitions. PetG is required for either the stability or assembly of the cytochrome b6-f complex.</text>
</comment>
<comment type="subunit">
    <text evidence="1">The 4 large subunits of the cytochrome b6-f complex are cytochrome b6, subunit IV (17 kDa polypeptide, PetD), cytochrome f and the Rieske protein, while the 4 small subunits are PetG, PetL, PetM and PetN. The complex functions as a dimer.</text>
</comment>
<comment type="subcellular location">
    <subcellularLocation>
        <location evidence="1">Plastid</location>
        <location evidence="1">Chloroplast thylakoid membrane</location>
        <topology evidence="1">Single-pass membrane protein</topology>
    </subcellularLocation>
</comment>
<comment type="similarity">
    <text evidence="1">Belongs to the PetG family.</text>
</comment>
<name>PETG_SOLBU</name>
<reference key="1">
    <citation type="journal article" date="2006" name="Theor. Appl. Genet.">
        <title>Complete chloroplast genome sequences of Solanum bulbocastanum, Solanum lycopersicum and comparative analyses with other Solanaceae genomes.</title>
        <authorList>
            <person name="Daniell H."/>
            <person name="Lee S.-B."/>
            <person name="Grevich J."/>
            <person name="Saski C."/>
            <person name="Quesada-Vargas T."/>
            <person name="Guda C."/>
            <person name="Tomkins J."/>
            <person name="Jansen R.K."/>
        </authorList>
    </citation>
    <scope>NUCLEOTIDE SEQUENCE [LARGE SCALE GENOMIC DNA]</scope>
    <source>
        <strain>cv. PT29</strain>
    </source>
</reference>
<evidence type="ECO:0000255" key="1">
    <source>
        <dbReference type="HAMAP-Rule" id="MF_00432"/>
    </source>
</evidence>
<protein>
    <recommendedName>
        <fullName evidence="1">Cytochrome b6-f complex subunit 5</fullName>
    </recommendedName>
    <alternativeName>
        <fullName evidence="1">Cytochrome b6-f complex subunit PetG</fullName>
    </alternativeName>
    <alternativeName>
        <fullName evidence="1">Cytochrome b6-f complex subunit V</fullName>
    </alternativeName>
</protein>
<keyword id="KW-0150">Chloroplast</keyword>
<keyword id="KW-0249">Electron transport</keyword>
<keyword id="KW-0472">Membrane</keyword>
<keyword id="KW-0602">Photosynthesis</keyword>
<keyword id="KW-0934">Plastid</keyword>
<keyword id="KW-0793">Thylakoid</keyword>
<keyword id="KW-0812">Transmembrane</keyword>
<keyword id="KW-1133">Transmembrane helix</keyword>
<keyword id="KW-0813">Transport</keyword>
<geneLocation type="chloroplast"/>
<feature type="chain" id="PRO_0000275507" description="Cytochrome b6-f complex subunit 5">
    <location>
        <begin position="1"/>
        <end position="37"/>
    </location>
</feature>
<feature type="transmembrane region" description="Helical" evidence="1">
    <location>
        <begin position="5"/>
        <end position="25"/>
    </location>
</feature>
<accession>Q2MIG8</accession>
<organism>
    <name type="scientific">Solanum bulbocastanum</name>
    <name type="common">Wild potato</name>
    <dbReference type="NCBI Taxonomy" id="147425"/>
    <lineage>
        <taxon>Eukaryota</taxon>
        <taxon>Viridiplantae</taxon>
        <taxon>Streptophyta</taxon>
        <taxon>Embryophyta</taxon>
        <taxon>Tracheophyta</taxon>
        <taxon>Spermatophyta</taxon>
        <taxon>Magnoliopsida</taxon>
        <taxon>eudicotyledons</taxon>
        <taxon>Gunneridae</taxon>
        <taxon>Pentapetalae</taxon>
        <taxon>asterids</taxon>
        <taxon>lamiids</taxon>
        <taxon>Solanales</taxon>
        <taxon>Solanaceae</taxon>
        <taxon>Solanoideae</taxon>
        <taxon>Solaneae</taxon>
        <taxon>Solanum</taxon>
    </lineage>
</organism>
<proteinExistence type="inferred from homology"/>
<gene>
    <name evidence="1" type="primary">petG</name>
</gene>
<dbReference type="EMBL" id="DQ347958">
    <property type="protein sequence ID" value="ABC56232.1"/>
    <property type="molecule type" value="Genomic_DNA"/>
</dbReference>
<dbReference type="RefSeq" id="YP_538867.1">
    <property type="nucleotide sequence ID" value="NC_007943.1"/>
</dbReference>
<dbReference type="SMR" id="Q2MIG8"/>
<dbReference type="GeneID" id="3989443"/>
<dbReference type="GO" id="GO:0009535">
    <property type="term" value="C:chloroplast thylakoid membrane"/>
    <property type="evidence" value="ECO:0007669"/>
    <property type="project" value="UniProtKB-SubCell"/>
</dbReference>
<dbReference type="GO" id="GO:0009512">
    <property type="term" value="C:cytochrome b6f complex"/>
    <property type="evidence" value="ECO:0007669"/>
    <property type="project" value="InterPro"/>
</dbReference>
<dbReference type="GO" id="GO:0045158">
    <property type="term" value="F:electron transporter, transferring electrons within cytochrome b6/f complex of photosystem II activity"/>
    <property type="evidence" value="ECO:0007669"/>
    <property type="project" value="UniProtKB-UniRule"/>
</dbReference>
<dbReference type="GO" id="GO:0017004">
    <property type="term" value="P:cytochrome complex assembly"/>
    <property type="evidence" value="ECO:0007669"/>
    <property type="project" value="UniProtKB-UniRule"/>
</dbReference>
<dbReference type="GO" id="GO:0015979">
    <property type="term" value="P:photosynthesis"/>
    <property type="evidence" value="ECO:0007669"/>
    <property type="project" value="UniProtKB-KW"/>
</dbReference>
<dbReference type="HAMAP" id="MF_00432">
    <property type="entry name" value="Cytb6_f_PetG"/>
    <property type="match status" value="1"/>
</dbReference>
<dbReference type="InterPro" id="IPR003683">
    <property type="entry name" value="Cyt_6/f_cplx_su5"/>
</dbReference>
<dbReference type="InterPro" id="IPR036099">
    <property type="entry name" value="Cyt_6/f_cplx_su5_sf"/>
</dbReference>
<dbReference type="NCBIfam" id="NF001907">
    <property type="entry name" value="PRK00665.1"/>
    <property type="match status" value="1"/>
</dbReference>
<dbReference type="Pfam" id="PF02529">
    <property type="entry name" value="PetG"/>
    <property type="match status" value="1"/>
</dbReference>
<dbReference type="PIRSF" id="PIRSF000034">
    <property type="entry name" value="Cyt_b6-f_V"/>
    <property type="match status" value="1"/>
</dbReference>
<dbReference type="SUPFAM" id="SSF103446">
    <property type="entry name" value="PetG subunit of the cytochrome b6f complex"/>
    <property type="match status" value="1"/>
</dbReference>
<sequence length="37" mass="4170">MIEVFLFGIVLGLIPITLAGLFVTAYLQYRRGDQLDL</sequence>